<sequence>MTIMRKSHPLMKIVNHAFIDLPTPPNISGWWNFGSLLGLCLILQILTGLFLAMHYTSDTLTAFSSVTHICRDVNYGWLIRHMHANGASLFFICLYIHIGRGIYYGSYLYTETWNIGILLLLLTMATAFVGYVLPWGQMFFWGATVITNLLSAIPYIGQDLVEWIWGGFSVDKATLTRFFAFHFILPFIIAALAMVHLLFLHETGSNNPLGIPSDCGKVPFHPYYTTKDFLGAIMLLMLFLTLVLFFPDKLGDPDNYMPANSLNTPPHIKPEWYFLFAYAILRSIPNKLGGVVALALSILVLALLPYLHTSKQRSLSFRPLSQTLFWMLVADLLLLTWIGGQPVEPPFIIIGQVASALYFLILLLLMPMAGLIENKLLKW</sequence>
<evidence type="ECO:0000250" key="1"/>
<evidence type="ECO:0000250" key="2">
    <source>
        <dbReference type="UniProtKB" id="P00157"/>
    </source>
</evidence>
<evidence type="ECO:0000255" key="3">
    <source>
        <dbReference type="PROSITE-ProRule" id="PRU00967"/>
    </source>
</evidence>
<evidence type="ECO:0000255" key="4">
    <source>
        <dbReference type="PROSITE-ProRule" id="PRU00968"/>
    </source>
</evidence>
<comment type="function">
    <text evidence="2">Component of the ubiquinol-cytochrome c reductase complex (complex III or cytochrome b-c1 complex) that is part of the mitochondrial respiratory chain. The b-c1 complex mediates electron transfer from ubiquinol to cytochrome c. Contributes to the generation of a proton gradient across the mitochondrial membrane that is then used for ATP synthesis.</text>
</comment>
<comment type="cofactor">
    <cofactor evidence="2">
        <name>heme b</name>
        <dbReference type="ChEBI" id="CHEBI:60344"/>
    </cofactor>
    <text evidence="2">Binds 2 heme b groups non-covalently.</text>
</comment>
<comment type="subunit">
    <text evidence="2">The cytochrome bc1 complex contains 11 subunits: 3 respiratory subunits (MT-CYB, CYC1 and UQCRFS1), 2 core proteins (UQCRC1 and UQCRC2) and 6 low-molecular weight proteins (UQCRH/QCR6, UQCRB/QCR7, UQCRQ/QCR8, UQCR10/QCR9, UQCR11/QCR10 and a cleavage product of UQCRFS1). This cytochrome bc1 complex then forms a dimer.</text>
</comment>
<comment type="subcellular location">
    <subcellularLocation>
        <location evidence="2">Mitochondrion inner membrane</location>
        <topology evidence="2">Multi-pass membrane protein</topology>
    </subcellularLocation>
</comment>
<comment type="miscellaneous">
    <text evidence="1">Heme 1 (or BL or b562) is low-potential and absorbs at about 562 nm, and heme 2 (or BH or b566) is high-potential and absorbs at about 566 nm.</text>
</comment>
<comment type="similarity">
    <text evidence="3 4">Belongs to the cytochrome b family.</text>
</comment>
<comment type="caution">
    <text evidence="2">The full-length protein contains only eight transmembrane helices, not nine as predicted by bioinformatics tools.</text>
</comment>
<proteinExistence type="inferred from homology"/>
<organism>
    <name type="scientific">Geomys tropicalis</name>
    <name type="common">Tropical pocket gopher</name>
    <dbReference type="NCBI Taxonomy" id="108586"/>
    <lineage>
        <taxon>Eukaryota</taxon>
        <taxon>Metazoa</taxon>
        <taxon>Chordata</taxon>
        <taxon>Craniata</taxon>
        <taxon>Vertebrata</taxon>
        <taxon>Euteleostomi</taxon>
        <taxon>Mammalia</taxon>
        <taxon>Eutheria</taxon>
        <taxon>Euarchontoglires</taxon>
        <taxon>Glires</taxon>
        <taxon>Rodentia</taxon>
        <taxon>Castorimorpha</taxon>
        <taxon>Geomyidae</taxon>
        <taxon>Geomys</taxon>
    </lineage>
</organism>
<feature type="chain" id="PRO_0000255058" description="Cytochrome b">
    <location>
        <begin position="1"/>
        <end position="379"/>
    </location>
</feature>
<feature type="transmembrane region" description="Helical" evidence="2">
    <location>
        <begin position="33"/>
        <end position="53"/>
    </location>
</feature>
<feature type="transmembrane region" description="Helical" evidence="2">
    <location>
        <begin position="77"/>
        <end position="98"/>
    </location>
</feature>
<feature type="transmembrane region" description="Helical" evidence="2">
    <location>
        <begin position="113"/>
        <end position="133"/>
    </location>
</feature>
<feature type="transmembrane region" description="Helical" evidence="2">
    <location>
        <begin position="178"/>
        <end position="198"/>
    </location>
</feature>
<feature type="transmembrane region" description="Helical" evidence="2">
    <location>
        <begin position="226"/>
        <end position="246"/>
    </location>
</feature>
<feature type="transmembrane region" description="Helical" evidence="2">
    <location>
        <begin position="288"/>
        <end position="308"/>
    </location>
</feature>
<feature type="transmembrane region" description="Helical" evidence="2">
    <location>
        <begin position="320"/>
        <end position="340"/>
    </location>
</feature>
<feature type="transmembrane region" description="Helical" evidence="2">
    <location>
        <begin position="347"/>
        <end position="367"/>
    </location>
</feature>
<feature type="binding site" description="axial binding residue" evidence="2">
    <location>
        <position position="83"/>
    </location>
    <ligand>
        <name>heme b</name>
        <dbReference type="ChEBI" id="CHEBI:60344"/>
        <label>b562</label>
    </ligand>
    <ligandPart>
        <name>Fe</name>
        <dbReference type="ChEBI" id="CHEBI:18248"/>
    </ligandPart>
</feature>
<feature type="binding site" description="axial binding residue" evidence="2">
    <location>
        <position position="97"/>
    </location>
    <ligand>
        <name>heme b</name>
        <dbReference type="ChEBI" id="CHEBI:60344"/>
        <label>b566</label>
    </ligand>
    <ligandPart>
        <name>Fe</name>
        <dbReference type="ChEBI" id="CHEBI:18248"/>
    </ligandPart>
</feature>
<feature type="binding site" description="axial binding residue" evidence="2">
    <location>
        <position position="182"/>
    </location>
    <ligand>
        <name>heme b</name>
        <dbReference type="ChEBI" id="CHEBI:60344"/>
        <label>b562</label>
    </ligand>
    <ligandPart>
        <name>Fe</name>
        <dbReference type="ChEBI" id="CHEBI:18248"/>
    </ligandPart>
</feature>
<feature type="binding site" description="axial binding residue" evidence="2">
    <location>
        <position position="196"/>
    </location>
    <ligand>
        <name>heme b</name>
        <dbReference type="ChEBI" id="CHEBI:60344"/>
        <label>b566</label>
    </ligand>
    <ligandPart>
        <name>Fe</name>
        <dbReference type="ChEBI" id="CHEBI:18248"/>
    </ligandPart>
</feature>
<feature type="binding site" evidence="2">
    <location>
        <position position="201"/>
    </location>
    <ligand>
        <name>a ubiquinone</name>
        <dbReference type="ChEBI" id="CHEBI:16389"/>
    </ligand>
</feature>
<gene>
    <name type="primary">MT-CYB</name>
    <name type="synonym">COB</name>
    <name type="synonym">CYTB</name>
    <name type="synonym">MTCYB</name>
</gene>
<name>CYB_GEOTO</name>
<dbReference type="EMBL" id="AY393970">
    <property type="protein sequence ID" value="AAR84543.1"/>
    <property type="molecule type" value="Genomic_DNA"/>
</dbReference>
<dbReference type="SMR" id="Q5YJ58"/>
<dbReference type="GO" id="GO:0005743">
    <property type="term" value="C:mitochondrial inner membrane"/>
    <property type="evidence" value="ECO:0007669"/>
    <property type="project" value="UniProtKB-SubCell"/>
</dbReference>
<dbReference type="GO" id="GO:0045275">
    <property type="term" value="C:respiratory chain complex III"/>
    <property type="evidence" value="ECO:0007669"/>
    <property type="project" value="InterPro"/>
</dbReference>
<dbReference type="GO" id="GO:0046872">
    <property type="term" value="F:metal ion binding"/>
    <property type="evidence" value="ECO:0007669"/>
    <property type="project" value="UniProtKB-KW"/>
</dbReference>
<dbReference type="GO" id="GO:0008121">
    <property type="term" value="F:ubiquinol-cytochrome-c reductase activity"/>
    <property type="evidence" value="ECO:0007669"/>
    <property type="project" value="InterPro"/>
</dbReference>
<dbReference type="GO" id="GO:0006122">
    <property type="term" value="P:mitochondrial electron transport, ubiquinol to cytochrome c"/>
    <property type="evidence" value="ECO:0007669"/>
    <property type="project" value="TreeGrafter"/>
</dbReference>
<dbReference type="CDD" id="cd00290">
    <property type="entry name" value="cytochrome_b_C"/>
    <property type="match status" value="1"/>
</dbReference>
<dbReference type="CDD" id="cd00284">
    <property type="entry name" value="Cytochrome_b_N"/>
    <property type="match status" value="1"/>
</dbReference>
<dbReference type="FunFam" id="1.20.810.10:FF:000002">
    <property type="entry name" value="Cytochrome b"/>
    <property type="match status" value="1"/>
</dbReference>
<dbReference type="Gene3D" id="1.20.810.10">
    <property type="entry name" value="Cytochrome Bc1 Complex, Chain C"/>
    <property type="match status" value="1"/>
</dbReference>
<dbReference type="InterPro" id="IPR005798">
    <property type="entry name" value="Cyt_b/b6_C"/>
</dbReference>
<dbReference type="InterPro" id="IPR036150">
    <property type="entry name" value="Cyt_b/b6_C_sf"/>
</dbReference>
<dbReference type="InterPro" id="IPR005797">
    <property type="entry name" value="Cyt_b/b6_N"/>
</dbReference>
<dbReference type="InterPro" id="IPR027387">
    <property type="entry name" value="Cytb/b6-like_sf"/>
</dbReference>
<dbReference type="InterPro" id="IPR030689">
    <property type="entry name" value="Cytochrome_b"/>
</dbReference>
<dbReference type="InterPro" id="IPR048260">
    <property type="entry name" value="Cytochrome_b_C_euk/bac"/>
</dbReference>
<dbReference type="InterPro" id="IPR048259">
    <property type="entry name" value="Cytochrome_b_N_euk/bac"/>
</dbReference>
<dbReference type="InterPro" id="IPR016174">
    <property type="entry name" value="Di-haem_cyt_TM"/>
</dbReference>
<dbReference type="PANTHER" id="PTHR19271">
    <property type="entry name" value="CYTOCHROME B"/>
    <property type="match status" value="1"/>
</dbReference>
<dbReference type="PANTHER" id="PTHR19271:SF16">
    <property type="entry name" value="CYTOCHROME B"/>
    <property type="match status" value="1"/>
</dbReference>
<dbReference type="Pfam" id="PF00032">
    <property type="entry name" value="Cytochrom_B_C"/>
    <property type="match status" value="1"/>
</dbReference>
<dbReference type="Pfam" id="PF00033">
    <property type="entry name" value="Cytochrome_B"/>
    <property type="match status" value="1"/>
</dbReference>
<dbReference type="PIRSF" id="PIRSF038885">
    <property type="entry name" value="COB"/>
    <property type="match status" value="1"/>
</dbReference>
<dbReference type="SUPFAM" id="SSF81648">
    <property type="entry name" value="a domain/subunit of cytochrome bc1 complex (Ubiquinol-cytochrome c reductase)"/>
    <property type="match status" value="1"/>
</dbReference>
<dbReference type="SUPFAM" id="SSF81342">
    <property type="entry name" value="Transmembrane di-heme cytochromes"/>
    <property type="match status" value="1"/>
</dbReference>
<dbReference type="PROSITE" id="PS51003">
    <property type="entry name" value="CYTB_CTER"/>
    <property type="match status" value="1"/>
</dbReference>
<dbReference type="PROSITE" id="PS51002">
    <property type="entry name" value="CYTB_NTER"/>
    <property type="match status" value="1"/>
</dbReference>
<keyword id="KW-0249">Electron transport</keyword>
<keyword id="KW-0349">Heme</keyword>
<keyword id="KW-0408">Iron</keyword>
<keyword id="KW-0472">Membrane</keyword>
<keyword id="KW-0479">Metal-binding</keyword>
<keyword id="KW-0496">Mitochondrion</keyword>
<keyword id="KW-0999">Mitochondrion inner membrane</keyword>
<keyword id="KW-0679">Respiratory chain</keyword>
<keyword id="KW-0812">Transmembrane</keyword>
<keyword id="KW-1133">Transmembrane helix</keyword>
<keyword id="KW-0813">Transport</keyword>
<keyword id="KW-0830">Ubiquinone</keyword>
<geneLocation type="mitochondrion"/>
<protein>
    <recommendedName>
        <fullName>Cytochrome b</fullName>
    </recommendedName>
    <alternativeName>
        <fullName>Complex III subunit 3</fullName>
    </alternativeName>
    <alternativeName>
        <fullName>Complex III subunit III</fullName>
    </alternativeName>
    <alternativeName>
        <fullName>Cytochrome b-c1 complex subunit 3</fullName>
    </alternativeName>
    <alternativeName>
        <fullName>Ubiquinol-cytochrome-c reductase complex cytochrome b subunit</fullName>
    </alternativeName>
</protein>
<accession>Q5YJ58</accession>
<reference key="1">
    <citation type="journal article" date="2006" name="J. Mammal.">
        <title>Molecular systematics of pocket gophers of the genus Geomys.</title>
        <authorList>
            <person name="Sudman P.D."/>
            <person name="Wickliffe J.K."/>
            <person name="Horner P."/>
            <person name="Smolen M.J."/>
            <person name="Bickham J.W."/>
            <person name="Bradley R.D."/>
        </authorList>
    </citation>
    <scope>NUCLEOTIDE SEQUENCE [GENOMIC DNA]</scope>
</reference>